<keyword id="KW-0028">Amino-acid biosynthesis</keyword>
<keyword id="KW-0963">Cytoplasm</keyword>
<keyword id="KW-0220">Diaminopimelate biosynthesis</keyword>
<keyword id="KW-0457">Lysine biosynthesis</keyword>
<keyword id="KW-0520">NAD</keyword>
<keyword id="KW-0521">NADP</keyword>
<keyword id="KW-0560">Oxidoreductase</keyword>
<keyword id="KW-1185">Reference proteome</keyword>
<organism>
    <name type="scientific">Pelobacter propionicus (strain DSM 2379 / NBRC 103807 / OttBd1)</name>
    <dbReference type="NCBI Taxonomy" id="338966"/>
    <lineage>
        <taxon>Bacteria</taxon>
        <taxon>Pseudomonadati</taxon>
        <taxon>Thermodesulfobacteriota</taxon>
        <taxon>Desulfuromonadia</taxon>
        <taxon>Desulfuromonadales</taxon>
        <taxon>Desulfuromonadaceae</taxon>
        <taxon>Pelobacter</taxon>
    </lineage>
</organism>
<protein>
    <recommendedName>
        <fullName evidence="1">4-hydroxy-tetrahydrodipicolinate reductase</fullName>
        <shortName evidence="1">HTPA reductase</shortName>
        <ecNumber evidence="1">1.17.1.8</ecNumber>
    </recommendedName>
</protein>
<dbReference type="EC" id="1.17.1.8" evidence="1"/>
<dbReference type="EMBL" id="CP000482">
    <property type="protein sequence ID" value="ABL00658.1"/>
    <property type="molecule type" value="Genomic_DNA"/>
</dbReference>
<dbReference type="RefSeq" id="WP_011736893.1">
    <property type="nucleotide sequence ID" value="NC_008609.1"/>
</dbReference>
<dbReference type="SMR" id="A1ATI7"/>
<dbReference type="STRING" id="338966.Ppro_3062"/>
<dbReference type="KEGG" id="ppd:Ppro_3062"/>
<dbReference type="eggNOG" id="COG0289">
    <property type="taxonomic scope" value="Bacteria"/>
</dbReference>
<dbReference type="HOGENOM" id="CLU_047479_2_1_7"/>
<dbReference type="OrthoDB" id="9790352at2"/>
<dbReference type="UniPathway" id="UPA00034">
    <property type="reaction ID" value="UER00018"/>
</dbReference>
<dbReference type="Proteomes" id="UP000006732">
    <property type="component" value="Chromosome"/>
</dbReference>
<dbReference type="GO" id="GO:0005829">
    <property type="term" value="C:cytosol"/>
    <property type="evidence" value="ECO:0007669"/>
    <property type="project" value="TreeGrafter"/>
</dbReference>
<dbReference type="GO" id="GO:0008839">
    <property type="term" value="F:4-hydroxy-tetrahydrodipicolinate reductase"/>
    <property type="evidence" value="ECO:0007669"/>
    <property type="project" value="UniProtKB-EC"/>
</dbReference>
<dbReference type="GO" id="GO:0051287">
    <property type="term" value="F:NAD binding"/>
    <property type="evidence" value="ECO:0007669"/>
    <property type="project" value="UniProtKB-UniRule"/>
</dbReference>
<dbReference type="GO" id="GO:0050661">
    <property type="term" value="F:NADP binding"/>
    <property type="evidence" value="ECO:0007669"/>
    <property type="project" value="UniProtKB-UniRule"/>
</dbReference>
<dbReference type="GO" id="GO:0016726">
    <property type="term" value="F:oxidoreductase activity, acting on CH or CH2 groups, NAD or NADP as acceptor"/>
    <property type="evidence" value="ECO:0007669"/>
    <property type="project" value="UniProtKB-UniRule"/>
</dbReference>
<dbReference type="GO" id="GO:0019877">
    <property type="term" value="P:diaminopimelate biosynthetic process"/>
    <property type="evidence" value="ECO:0007669"/>
    <property type="project" value="UniProtKB-UniRule"/>
</dbReference>
<dbReference type="GO" id="GO:0009089">
    <property type="term" value="P:lysine biosynthetic process via diaminopimelate"/>
    <property type="evidence" value="ECO:0007669"/>
    <property type="project" value="UniProtKB-UniRule"/>
</dbReference>
<dbReference type="CDD" id="cd02274">
    <property type="entry name" value="DHDPR_N"/>
    <property type="match status" value="1"/>
</dbReference>
<dbReference type="FunFam" id="3.30.360.10:FF:000004">
    <property type="entry name" value="4-hydroxy-tetrahydrodipicolinate reductase"/>
    <property type="match status" value="1"/>
</dbReference>
<dbReference type="Gene3D" id="3.30.360.10">
    <property type="entry name" value="Dihydrodipicolinate Reductase, domain 2"/>
    <property type="match status" value="1"/>
</dbReference>
<dbReference type="Gene3D" id="3.40.50.720">
    <property type="entry name" value="NAD(P)-binding Rossmann-like Domain"/>
    <property type="match status" value="1"/>
</dbReference>
<dbReference type="HAMAP" id="MF_00102">
    <property type="entry name" value="DapB"/>
    <property type="match status" value="1"/>
</dbReference>
<dbReference type="InterPro" id="IPR022663">
    <property type="entry name" value="DapB_C"/>
</dbReference>
<dbReference type="InterPro" id="IPR000846">
    <property type="entry name" value="DapB_N"/>
</dbReference>
<dbReference type="InterPro" id="IPR022664">
    <property type="entry name" value="DapB_N_CS"/>
</dbReference>
<dbReference type="InterPro" id="IPR023940">
    <property type="entry name" value="DHDPR_bac"/>
</dbReference>
<dbReference type="InterPro" id="IPR036291">
    <property type="entry name" value="NAD(P)-bd_dom_sf"/>
</dbReference>
<dbReference type="NCBIfam" id="TIGR00036">
    <property type="entry name" value="dapB"/>
    <property type="match status" value="1"/>
</dbReference>
<dbReference type="PANTHER" id="PTHR20836:SF0">
    <property type="entry name" value="4-HYDROXY-TETRAHYDRODIPICOLINATE REDUCTASE 1, CHLOROPLASTIC-RELATED"/>
    <property type="match status" value="1"/>
</dbReference>
<dbReference type="PANTHER" id="PTHR20836">
    <property type="entry name" value="DIHYDRODIPICOLINATE REDUCTASE"/>
    <property type="match status" value="1"/>
</dbReference>
<dbReference type="Pfam" id="PF05173">
    <property type="entry name" value="DapB_C"/>
    <property type="match status" value="1"/>
</dbReference>
<dbReference type="Pfam" id="PF01113">
    <property type="entry name" value="DapB_N"/>
    <property type="match status" value="1"/>
</dbReference>
<dbReference type="PIRSF" id="PIRSF000161">
    <property type="entry name" value="DHPR"/>
    <property type="match status" value="1"/>
</dbReference>
<dbReference type="SUPFAM" id="SSF55347">
    <property type="entry name" value="Glyceraldehyde-3-phosphate dehydrogenase-like, C-terminal domain"/>
    <property type="match status" value="1"/>
</dbReference>
<dbReference type="SUPFAM" id="SSF51735">
    <property type="entry name" value="NAD(P)-binding Rossmann-fold domains"/>
    <property type="match status" value="1"/>
</dbReference>
<dbReference type="PROSITE" id="PS01298">
    <property type="entry name" value="DAPB"/>
    <property type="match status" value="1"/>
</dbReference>
<reference key="1">
    <citation type="submission" date="2006-10" db="EMBL/GenBank/DDBJ databases">
        <title>Complete sequence of chromosome of Pelobacter propionicus DSM 2379.</title>
        <authorList>
            <consortium name="US DOE Joint Genome Institute"/>
            <person name="Copeland A."/>
            <person name="Lucas S."/>
            <person name="Lapidus A."/>
            <person name="Barry K."/>
            <person name="Detter J.C."/>
            <person name="Glavina del Rio T."/>
            <person name="Hammon N."/>
            <person name="Israni S."/>
            <person name="Dalin E."/>
            <person name="Tice H."/>
            <person name="Pitluck S."/>
            <person name="Saunders E."/>
            <person name="Brettin T."/>
            <person name="Bruce D."/>
            <person name="Han C."/>
            <person name="Tapia R."/>
            <person name="Schmutz J."/>
            <person name="Larimer F."/>
            <person name="Land M."/>
            <person name="Hauser L."/>
            <person name="Kyrpides N."/>
            <person name="Kim E."/>
            <person name="Lovley D."/>
            <person name="Richardson P."/>
        </authorList>
    </citation>
    <scope>NUCLEOTIDE SEQUENCE [LARGE SCALE GENOMIC DNA]</scope>
    <source>
        <strain>DSM 2379 / NBRC 103807 / OttBd1</strain>
    </source>
</reference>
<sequence>MIKIAVCGAAGRMGQRLINSVQEAEGVCLSGVLERPAHPLVGQDAGLVAGCGALGVSISDDLNAVIAGCDVLIDFTAPKVSLKNLEACGLQRKSIVIGSTGFTPEERQLAMELTRNISAILAPNMSVGVNVCFKILKDIAATLGDDFDVEIVESHHRMKVDAPSGTAVRMGQVVAEALGRDYDRVANFHREGITGSRTKDEIGMQTIRGGDIVGEHTVYFIGMGERIELSHRAMNRDMFSRGAVRAATWVVGQAPGLYDMQDVLGLK</sequence>
<proteinExistence type="inferred from homology"/>
<accession>A1ATI7</accession>
<gene>
    <name evidence="1" type="primary">dapB</name>
    <name type="ordered locus">Ppro_3062</name>
</gene>
<feature type="chain" id="PRO_1000008609" description="4-hydroxy-tetrahydrodipicolinate reductase">
    <location>
        <begin position="1"/>
        <end position="267"/>
    </location>
</feature>
<feature type="active site" description="Proton donor/acceptor" evidence="1">
    <location>
        <position position="155"/>
    </location>
</feature>
<feature type="active site" description="Proton donor" evidence="1">
    <location>
        <position position="159"/>
    </location>
</feature>
<feature type="binding site" evidence="1">
    <location>
        <begin position="8"/>
        <end position="13"/>
    </location>
    <ligand>
        <name>NAD(+)</name>
        <dbReference type="ChEBI" id="CHEBI:57540"/>
    </ligand>
</feature>
<feature type="binding site" evidence="1">
    <location>
        <position position="34"/>
    </location>
    <ligand>
        <name>NAD(+)</name>
        <dbReference type="ChEBI" id="CHEBI:57540"/>
    </ligand>
</feature>
<feature type="binding site" evidence="1">
    <location>
        <position position="35"/>
    </location>
    <ligand>
        <name>NADP(+)</name>
        <dbReference type="ChEBI" id="CHEBI:58349"/>
    </ligand>
</feature>
<feature type="binding site" evidence="1">
    <location>
        <begin position="98"/>
        <end position="100"/>
    </location>
    <ligand>
        <name>NAD(+)</name>
        <dbReference type="ChEBI" id="CHEBI:57540"/>
    </ligand>
</feature>
<feature type="binding site" evidence="1">
    <location>
        <begin position="122"/>
        <end position="125"/>
    </location>
    <ligand>
        <name>NAD(+)</name>
        <dbReference type="ChEBI" id="CHEBI:57540"/>
    </ligand>
</feature>
<feature type="binding site" evidence="1">
    <location>
        <position position="156"/>
    </location>
    <ligand>
        <name>(S)-2,3,4,5-tetrahydrodipicolinate</name>
        <dbReference type="ChEBI" id="CHEBI:16845"/>
    </ligand>
</feature>
<feature type="binding site" evidence="1">
    <location>
        <begin position="165"/>
        <end position="166"/>
    </location>
    <ligand>
        <name>(S)-2,3,4,5-tetrahydrodipicolinate</name>
        <dbReference type="ChEBI" id="CHEBI:16845"/>
    </ligand>
</feature>
<name>DAPB_PELPD</name>
<comment type="function">
    <text evidence="1">Catalyzes the conversion of 4-hydroxy-tetrahydrodipicolinate (HTPA) to tetrahydrodipicolinate.</text>
</comment>
<comment type="catalytic activity">
    <reaction evidence="1">
        <text>(S)-2,3,4,5-tetrahydrodipicolinate + NAD(+) + H2O = (2S,4S)-4-hydroxy-2,3,4,5-tetrahydrodipicolinate + NADH + H(+)</text>
        <dbReference type="Rhea" id="RHEA:35323"/>
        <dbReference type="ChEBI" id="CHEBI:15377"/>
        <dbReference type="ChEBI" id="CHEBI:15378"/>
        <dbReference type="ChEBI" id="CHEBI:16845"/>
        <dbReference type="ChEBI" id="CHEBI:57540"/>
        <dbReference type="ChEBI" id="CHEBI:57945"/>
        <dbReference type="ChEBI" id="CHEBI:67139"/>
        <dbReference type="EC" id="1.17.1.8"/>
    </reaction>
</comment>
<comment type="catalytic activity">
    <reaction evidence="1">
        <text>(S)-2,3,4,5-tetrahydrodipicolinate + NADP(+) + H2O = (2S,4S)-4-hydroxy-2,3,4,5-tetrahydrodipicolinate + NADPH + H(+)</text>
        <dbReference type="Rhea" id="RHEA:35331"/>
        <dbReference type="ChEBI" id="CHEBI:15377"/>
        <dbReference type="ChEBI" id="CHEBI:15378"/>
        <dbReference type="ChEBI" id="CHEBI:16845"/>
        <dbReference type="ChEBI" id="CHEBI:57783"/>
        <dbReference type="ChEBI" id="CHEBI:58349"/>
        <dbReference type="ChEBI" id="CHEBI:67139"/>
        <dbReference type="EC" id="1.17.1.8"/>
    </reaction>
</comment>
<comment type="pathway">
    <text evidence="1">Amino-acid biosynthesis; L-lysine biosynthesis via DAP pathway; (S)-tetrahydrodipicolinate from L-aspartate: step 4/4.</text>
</comment>
<comment type="subcellular location">
    <subcellularLocation>
        <location evidence="1">Cytoplasm</location>
    </subcellularLocation>
</comment>
<comment type="similarity">
    <text evidence="1">Belongs to the DapB family.</text>
</comment>
<comment type="caution">
    <text evidence="2">Was originally thought to be a dihydrodipicolinate reductase (DHDPR), catalyzing the conversion of dihydrodipicolinate to tetrahydrodipicolinate. However, it was shown in E.coli that the substrate of the enzymatic reaction is not dihydrodipicolinate (DHDP) but in fact (2S,4S)-4-hydroxy-2,3,4,5-tetrahydrodipicolinic acid (HTPA), the product released by the DapA-catalyzed reaction.</text>
</comment>
<evidence type="ECO:0000255" key="1">
    <source>
        <dbReference type="HAMAP-Rule" id="MF_00102"/>
    </source>
</evidence>
<evidence type="ECO:0000305" key="2"/>